<keyword id="KW-1185">Reference proteome</keyword>
<gene>
    <name type="primary">CYSRT1</name>
</gene>
<evidence type="ECO:0000250" key="1">
    <source>
        <dbReference type="UniProtKB" id="A8MQ03"/>
    </source>
</evidence>
<evidence type="ECO:0000256" key="2">
    <source>
        <dbReference type="SAM" id="MobiDB-lite"/>
    </source>
</evidence>
<evidence type="ECO:0000305" key="3"/>
<name>CRTP1_BOVIN</name>
<proteinExistence type="evidence at transcript level"/>
<protein>
    <recommendedName>
        <fullName>Cysteine-rich tail protein 1</fullName>
    </recommendedName>
</protein>
<dbReference type="EMBL" id="BC126816">
    <property type="protein sequence ID" value="AAI26817.1"/>
    <property type="molecule type" value="mRNA"/>
</dbReference>
<dbReference type="RefSeq" id="NP_001071556.1">
    <property type="nucleotide sequence ID" value="NM_001078088.2"/>
</dbReference>
<dbReference type="FunCoup" id="A0JNN6">
    <property type="interactions" value="23"/>
</dbReference>
<dbReference type="PaxDb" id="9913-ENSBTAP00000056008"/>
<dbReference type="Ensembl" id="ENSBTAT00000064095.3">
    <property type="protein sequence ID" value="ENSBTAP00000056008.1"/>
    <property type="gene ID" value="ENSBTAG00000045711.3"/>
</dbReference>
<dbReference type="GeneID" id="618457"/>
<dbReference type="KEGG" id="bta:618457"/>
<dbReference type="CTD" id="375791"/>
<dbReference type="VEuPathDB" id="HostDB:ENSBTAG00000045711"/>
<dbReference type="VGNC" id="VGNC:50272">
    <property type="gene designation" value="CYSRT1"/>
</dbReference>
<dbReference type="eggNOG" id="ENOG502SD8F">
    <property type="taxonomic scope" value="Eukaryota"/>
</dbReference>
<dbReference type="GeneTree" id="ENSGT00390000003233"/>
<dbReference type="HOGENOM" id="CLU_126077_0_0_1"/>
<dbReference type="InParanoid" id="A0JNN6"/>
<dbReference type="OMA" id="CHRCCCV"/>
<dbReference type="OrthoDB" id="9836806at2759"/>
<dbReference type="TreeFam" id="TF338434"/>
<dbReference type="Proteomes" id="UP000009136">
    <property type="component" value="Chromosome 11"/>
</dbReference>
<dbReference type="Bgee" id="ENSBTAG00000045711">
    <property type="expression patterns" value="Expressed in esophagus and 91 other cell types or tissues"/>
</dbReference>
<dbReference type="GO" id="GO:0001533">
    <property type="term" value="C:cornified envelope"/>
    <property type="evidence" value="ECO:0000250"/>
    <property type="project" value="UniProtKB"/>
</dbReference>
<dbReference type="GO" id="GO:0042802">
    <property type="term" value="F:identical protein binding"/>
    <property type="evidence" value="ECO:0007669"/>
    <property type="project" value="Ensembl"/>
</dbReference>
<dbReference type="GO" id="GO:0051702">
    <property type="term" value="P:biological process involved in interaction with symbiont"/>
    <property type="evidence" value="ECO:0000250"/>
    <property type="project" value="UniProtKB"/>
</dbReference>
<dbReference type="GO" id="GO:0061436">
    <property type="term" value="P:establishment of skin barrier"/>
    <property type="evidence" value="ECO:0000250"/>
    <property type="project" value="UniProtKB"/>
</dbReference>
<dbReference type="InterPro" id="IPR018904">
    <property type="entry name" value="UPF0574"/>
</dbReference>
<dbReference type="PANTHER" id="PTHR37879">
    <property type="entry name" value="CYSTEINE-RICH TAIL PROTEIN 1"/>
    <property type="match status" value="1"/>
</dbReference>
<dbReference type="PANTHER" id="PTHR37879:SF1">
    <property type="entry name" value="CYSTEINE-RICH TAIL PROTEIN 1"/>
    <property type="match status" value="1"/>
</dbReference>
<dbReference type="Pfam" id="PF10631">
    <property type="entry name" value="DUF2477"/>
    <property type="match status" value="1"/>
</dbReference>
<comment type="function">
    <text evidence="1">Component of the stratum corneum that may contribute to epidermal antimicrobial host defenses.</text>
</comment>
<comment type="subunit">
    <text evidence="1">Interacts with components of the late cornfied envelope (LCE).</text>
</comment>
<comment type="subcellular location">
    <subcellularLocation>
        <location evidence="1">Cornified envelope</location>
    </subcellularLocation>
</comment>
<comment type="similarity">
    <text evidence="3">Belongs to the CYSRT1 family.</text>
</comment>
<organism>
    <name type="scientific">Bos taurus</name>
    <name type="common">Bovine</name>
    <dbReference type="NCBI Taxonomy" id="9913"/>
    <lineage>
        <taxon>Eukaryota</taxon>
        <taxon>Metazoa</taxon>
        <taxon>Chordata</taxon>
        <taxon>Craniata</taxon>
        <taxon>Vertebrata</taxon>
        <taxon>Euteleostomi</taxon>
        <taxon>Mammalia</taxon>
        <taxon>Eutheria</taxon>
        <taxon>Laurasiatheria</taxon>
        <taxon>Artiodactyla</taxon>
        <taxon>Ruminantia</taxon>
        <taxon>Pecora</taxon>
        <taxon>Bovidae</taxon>
        <taxon>Bovinae</taxon>
        <taxon>Bos</taxon>
    </lineage>
</organism>
<feature type="chain" id="PRO_0000332286" description="Cysteine-rich tail protein 1">
    <location>
        <begin position="1"/>
        <end position="126"/>
    </location>
</feature>
<feature type="region of interest" description="Disordered" evidence="2">
    <location>
        <begin position="1"/>
        <end position="89"/>
    </location>
</feature>
<accession>A0JNN6</accession>
<sequence>MDPHETLVKNPYAHISIPRAHLRPELGQQRKAGPSSAESRPLPVRSCTLEPLEEAPGPKGTKGRPASQQPCKPCGSGQRPAGLAYAGPPPAQRGDDIAHHCWCCPCCSCCHCPRFCRCHSCCCVVS</sequence>
<reference key="1">
    <citation type="submission" date="2006-10" db="EMBL/GenBank/DDBJ databases">
        <authorList>
            <consortium name="NIH - Mammalian Gene Collection (MGC) project"/>
        </authorList>
    </citation>
    <scope>NUCLEOTIDE SEQUENCE [LARGE SCALE MRNA]</scope>
    <source>
        <strain>Hereford</strain>
        <tissue>Fetal lung</tissue>
    </source>
</reference>